<comment type="function">
    <text evidence="1">Component of the TIM22 complex, a complex that mediates the import and insertion of multi-pass transmembrane proteins into the mitochondrial inner membrane. The TIM22 complex forms a twin-pore translocase that uses the membrane potential as external driving force (By similarity).</text>
</comment>
<comment type="subunit">
    <text evidence="1">Heterohexamer; composed of 3 copies of timm9 and 3 copies of timm10, named soluble 70 kDa complex. Associates directly with the TIM22 complex, whose core is composed of timm22. Interacts with the transmembrane regions of multi-pass transmembrane proteins in transit (By similarity).</text>
</comment>
<comment type="subcellular location">
    <subcellularLocation>
        <location evidence="1">Mitochondrion inner membrane</location>
        <topology evidence="1">Peripheral membrane protein</topology>
    </subcellularLocation>
</comment>
<comment type="domain">
    <text evidence="1">The twin CX3C motif contains 4 conserved Cys residues that form 2 disulfide bonds in the mitochondrial intermembrane space. However, during the transit of timm9/timm10 from cytoplasm into mitochondrion, the Cys residues probably coordinate zinc, thereby preventing folding and allowing its transfer across mitochondrial outer membrane (By similarity).</text>
</comment>
<comment type="similarity">
    <text evidence="3">Belongs to the small Tim family.</text>
</comment>
<keyword id="KW-1015">Disulfide bond</keyword>
<keyword id="KW-0472">Membrane</keyword>
<keyword id="KW-0479">Metal-binding</keyword>
<keyword id="KW-0496">Mitochondrion</keyword>
<keyword id="KW-0999">Mitochondrion inner membrane</keyword>
<keyword id="KW-0653">Protein transport</keyword>
<keyword id="KW-1185">Reference proteome</keyword>
<keyword id="KW-0811">Translocation</keyword>
<keyword id="KW-0813">Transport</keyword>
<keyword id="KW-0862">Zinc</keyword>
<accession>Q54NZ0</accession>
<protein>
    <recommendedName>
        <fullName>Mitochondrial import inner membrane translocase subunit Tim10</fullName>
    </recommendedName>
</protein>
<reference key="1">
    <citation type="journal article" date="2005" name="Nature">
        <title>The genome of the social amoeba Dictyostelium discoideum.</title>
        <authorList>
            <person name="Eichinger L."/>
            <person name="Pachebat J.A."/>
            <person name="Gloeckner G."/>
            <person name="Rajandream M.A."/>
            <person name="Sucgang R."/>
            <person name="Berriman M."/>
            <person name="Song J."/>
            <person name="Olsen R."/>
            <person name="Szafranski K."/>
            <person name="Xu Q."/>
            <person name="Tunggal B."/>
            <person name="Kummerfeld S."/>
            <person name="Madera M."/>
            <person name="Konfortov B.A."/>
            <person name="Rivero F."/>
            <person name="Bankier A.T."/>
            <person name="Lehmann R."/>
            <person name="Hamlin N."/>
            <person name="Davies R."/>
            <person name="Gaudet P."/>
            <person name="Fey P."/>
            <person name="Pilcher K."/>
            <person name="Chen G."/>
            <person name="Saunders D."/>
            <person name="Sodergren E.J."/>
            <person name="Davis P."/>
            <person name="Kerhornou A."/>
            <person name="Nie X."/>
            <person name="Hall N."/>
            <person name="Anjard C."/>
            <person name="Hemphill L."/>
            <person name="Bason N."/>
            <person name="Farbrother P."/>
            <person name="Desany B."/>
            <person name="Just E."/>
            <person name="Morio T."/>
            <person name="Rost R."/>
            <person name="Churcher C.M."/>
            <person name="Cooper J."/>
            <person name="Haydock S."/>
            <person name="van Driessche N."/>
            <person name="Cronin A."/>
            <person name="Goodhead I."/>
            <person name="Muzny D.M."/>
            <person name="Mourier T."/>
            <person name="Pain A."/>
            <person name="Lu M."/>
            <person name="Harper D."/>
            <person name="Lindsay R."/>
            <person name="Hauser H."/>
            <person name="James K.D."/>
            <person name="Quiles M."/>
            <person name="Madan Babu M."/>
            <person name="Saito T."/>
            <person name="Buchrieser C."/>
            <person name="Wardroper A."/>
            <person name="Felder M."/>
            <person name="Thangavelu M."/>
            <person name="Johnson D."/>
            <person name="Knights A."/>
            <person name="Loulseged H."/>
            <person name="Mungall K.L."/>
            <person name="Oliver K."/>
            <person name="Price C."/>
            <person name="Quail M.A."/>
            <person name="Urushihara H."/>
            <person name="Hernandez J."/>
            <person name="Rabbinowitsch E."/>
            <person name="Steffen D."/>
            <person name="Sanders M."/>
            <person name="Ma J."/>
            <person name="Kohara Y."/>
            <person name="Sharp S."/>
            <person name="Simmonds M.N."/>
            <person name="Spiegler S."/>
            <person name="Tivey A."/>
            <person name="Sugano S."/>
            <person name="White B."/>
            <person name="Walker D."/>
            <person name="Woodward J.R."/>
            <person name="Winckler T."/>
            <person name="Tanaka Y."/>
            <person name="Shaulsky G."/>
            <person name="Schleicher M."/>
            <person name="Weinstock G.M."/>
            <person name="Rosenthal A."/>
            <person name="Cox E.C."/>
            <person name="Chisholm R.L."/>
            <person name="Gibbs R.A."/>
            <person name="Loomis W.F."/>
            <person name="Platzer M."/>
            <person name="Kay R.R."/>
            <person name="Williams J.G."/>
            <person name="Dear P.H."/>
            <person name="Noegel A.A."/>
            <person name="Barrell B.G."/>
            <person name="Kuspa A."/>
        </authorList>
    </citation>
    <scope>NUCLEOTIDE SEQUENCE [LARGE SCALE GENOMIC DNA]</scope>
    <source>
        <strain>AX4</strain>
    </source>
</reference>
<evidence type="ECO:0000250" key="1"/>
<evidence type="ECO:0000256" key="2">
    <source>
        <dbReference type="SAM" id="MobiDB-lite"/>
    </source>
</evidence>
<evidence type="ECO:0000305" key="3"/>
<organism>
    <name type="scientific">Dictyostelium discoideum</name>
    <name type="common">Social amoeba</name>
    <dbReference type="NCBI Taxonomy" id="44689"/>
    <lineage>
        <taxon>Eukaryota</taxon>
        <taxon>Amoebozoa</taxon>
        <taxon>Evosea</taxon>
        <taxon>Eumycetozoa</taxon>
        <taxon>Dictyostelia</taxon>
        <taxon>Dictyosteliales</taxon>
        <taxon>Dictyosteliaceae</taxon>
        <taxon>Dictyostelium</taxon>
    </lineage>
</organism>
<name>TIM10_DICDI</name>
<gene>
    <name type="primary">timm10</name>
    <name type="synonym">tim10</name>
    <name type="ORF">DDB_G0284911</name>
</gene>
<dbReference type="EMBL" id="AAFI02000073">
    <property type="protein sequence ID" value="EAL64919.1"/>
    <property type="molecule type" value="Genomic_DNA"/>
</dbReference>
<dbReference type="RefSeq" id="XP_639927.1">
    <property type="nucleotide sequence ID" value="XM_634835.1"/>
</dbReference>
<dbReference type="SMR" id="Q54NZ0"/>
<dbReference type="FunCoup" id="Q54NZ0">
    <property type="interactions" value="442"/>
</dbReference>
<dbReference type="STRING" id="44689.Q54NZ0"/>
<dbReference type="PaxDb" id="44689-DDB0252758"/>
<dbReference type="EnsemblProtists" id="EAL64919">
    <property type="protein sequence ID" value="EAL64919"/>
    <property type="gene ID" value="DDB_G0284911"/>
</dbReference>
<dbReference type="GeneID" id="8624839"/>
<dbReference type="KEGG" id="ddi:DDB_G0284911"/>
<dbReference type="dictyBase" id="DDB_G0284911">
    <property type="gene designation" value="timm10"/>
</dbReference>
<dbReference type="VEuPathDB" id="AmoebaDB:DDB_G0284911"/>
<dbReference type="eggNOG" id="ENOG502RICN">
    <property type="taxonomic scope" value="Eukaryota"/>
</dbReference>
<dbReference type="HOGENOM" id="CLU_2473661_0_0_1"/>
<dbReference type="InParanoid" id="Q54NZ0"/>
<dbReference type="OMA" id="ERCTEKW"/>
<dbReference type="PhylomeDB" id="Q54NZ0"/>
<dbReference type="Reactome" id="R-DDI-1268020">
    <property type="pathway name" value="Mitochondrial protein import"/>
</dbReference>
<dbReference type="PRO" id="PR:Q54NZ0"/>
<dbReference type="Proteomes" id="UP000002195">
    <property type="component" value="Chromosome 4"/>
</dbReference>
<dbReference type="GO" id="GO:0005743">
    <property type="term" value="C:mitochondrial inner membrane"/>
    <property type="evidence" value="ECO:0000318"/>
    <property type="project" value="GO_Central"/>
</dbReference>
<dbReference type="GO" id="GO:0042719">
    <property type="term" value="C:mitochondrial intermembrane space protein transporter complex"/>
    <property type="evidence" value="ECO:0000250"/>
    <property type="project" value="dictyBase"/>
</dbReference>
<dbReference type="GO" id="GO:0046872">
    <property type="term" value="F:metal ion binding"/>
    <property type="evidence" value="ECO:0007669"/>
    <property type="project" value="UniProtKB-KW"/>
</dbReference>
<dbReference type="GO" id="GO:0045039">
    <property type="term" value="P:protein insertion into mitochondrial inner membrane"/>
    <property type="evidence" value="ECO:0000250"/>
    <property type="project" value="dictyBase"/>
</dbReference>
<dbReference type="FunFam" id="1.10.287.810:FF:000011">
    <property type="entry name" value="Mitochondrial regulator of splicing 5"/>
    <property type="match status" value="1"/>
</dbReference>
<dbReference type="Gene3D" id="1.10.287.810">
    <property type="entry name" value="Mitochondrial import inner membrane translocase subunit tim13 like domains"/>
    <property type="match status" value="1"/>
</dbReference>
<dbReference type="InterPro" id="IPR004217">
    <property type="entry name" value="Tim10-like"/>
</dbReference>
<dbReference type="InterPro" id="IPR035427">
    <property type="entry name" value="Tim10-like_dom_sf"/>
</dbReference>
<dbReference type="PANTHER" id="PTHR11038">
    <property type="entry name" value="MITOCHONDRIAL IMPORT INNER MEMBRANE TRANSLOCASE SUBUNIT TIM10"/>
    <property type="match status" value="1"/>
</dbReference>
<dbReference type="PANTHER" id="PTHR11038:SF16">
    <property type="entry name" value="MITOCHONDRIAL IMPORT INNER MEMBRANE TRANSLOCASE SUBUNIT TIM10"/>
    <property type="match status" value="1"/>
</dbReference>
<dbReference type="Pfam" id="PF02953">
    <property type="entry name" value="zf-Tim10_DDP"/>
    <property type="match status" value="1"/>
</dbReference>
<dbReference type="SUPFAM" id="SSF144122">
    <property type="entry name" value="Tim10-like"/>
    <property type="match status" value="1"/>
</dbReference>
<feature type="chain" id="PRO_0000331559" description="Mitochondrial import inner membrane translocase subunit Tim10">
    <location>
        <begin position="1"/>
        <end position="88"/>
    </location>
</feature>
<feature type="region of interest" description="Disordered" evidence="2">
    <location>
        <begin position="63"/>
        <end position="88"/>
    </location>
</feature>
<feature type="short sequence motif" description="Twin CX3C motif">
    <location>
        <begin position="25"/>
        <end position="49"/>
    </location>
</feature>
<feature type="compositionally biased region" description="Low complexity" evidence="2">
    <location>
        <begin position="68"/>
        <end position="81"/>
    </location>
</feature>
<feature type="disulfide bond" evidence="1">
    <location>
        <begin position="25"/>
        <end position="49"/>
    </location>
</feature>
<feature type="disulfide bond" evidence="1">
    <location>
        <begin position="29"/>
        <end position="45"/>
    </location>
</feature>
<sequence length="88" mass="9855">MDDVEMKVMEMKMISKMFQGILDACSAKCISKYNEGDLNVGESVCAERCVQKWMETFKKVQSKMSGTQPGQEVPQEAPAAAPEKKGWF</sequence>
<proteinExistence type="inferred from homology"/>